<proteinExistence type="inferred from homology"/>
<protein>
    <recommendedName>
        <fullName evidence="1">Glutamine--fructose-6-phosphate aminotransferase [isomerizing]</fullName>
        <ecNumber evidence="1">2.6.1.16</ecNumber>
    </recommendedName>
    <alternativeName>
        <fullName evidence="1">D-fructose-6-phosphate amidotransferase</fullName>
    </alternativeName>
    <alternativeName>
        <fullName evidence="1">GFAT</fullName>
    </alternativeName>
    <alternativeName>
        <fullName evidence="1">Glucosamine-6-phosphate synthase</fullName>
    </alternativeName>
    <alternativeName>
        <fullName evidence="1">Hexosephosphate aminotransferase</fullName>
    </alternativeName>
    <alternativeName>
        <fullName evidence="1">L-glutamine--D-fructose-6-phosphate amidotransferase</fullName>
    </alternativeName>
</protein>
<reference key="1">
    <citation type="journal article" date="2004" name="Nucleic Acids Res.">
        <title>Unique features revealed by the genome sequence of Acinetobacter sp. ADP1, a versatile and naturally transformation competent bacterium.</title>
        <authorList>
            <person name="Barbe V."/>
            <person name="Vallenet D."/>
            <person name="Fonknechten N."/>
            <person name="Kreimeyer A."/>
            <person name="Oztas S."/>
            <person name="Labarre L."/>
            <person name="Cruveiller S."/>
            <person name="Robert C."/>
            <person name="Duprat S."/>
            <person name="Wincker P."/>
            <person name="Ornston L.N."/>
            <person name="Weissenbach J."/>
            <person name="Marliere P."/>
            <person name="Cohen G.N."/>
            <person name="Medigue C."/>
        </authorList>
    </citation>
    <scope>NUCLEOTIDE SEQUENCE [LARGE SCALE GENOMIC DNA]</scope>
    <source>
        <strain>ATCC 33305 / BD413 / ADP1</strain>
    </source>
</reference>
<comment type="function">
    <text evidence="1">Catalyzes the first step in hexosamine metabolism, converting fructose-6P into glucosamine-6P using glutamine as a nitrogen source.</text>
</comment>
<comment type="catalytic activity">
    <reaction evidence="1">
        <text>D-fructose 6-phosphate + L-glutamine = D-glucosamine 6-phosphate + L-glutamate</text>
        <dbReference type="Rhea" id="RHEA:13237"/>
        <dbReference type="ChEBI" id="CHEBI:29985"/>
        <dbReference type="ChEBI" id="CHEBI:58359"/>
        <dbReference type="ChEBI" id="CHEBI:58725"/>
        <dbReference type="ChEBI" id="CHEBI:61527"/>
        <dbReference type="EC" id="2.6.1.16"/>
    </reaction>
</comment>
<comment type="subunit">
    <text evidence="1">Homodimer.</text>
</comment>
<comment type="subcellular location">
    <subcellularLocation>
        <location evidence="1">Cytoplasm</location>
    </subcellularLocation>
</comment>
<accession>Q6F6U8</accession>
<keyword id="KW-0032">Aminotransferase</keyword>
<keyword id="KW-0963">Cytoplasm</keyword>
<keyword id="KW-0315">Glutamine amidotransferase</keyword>
<keyword id="KW-0677">Repeat</keyword>
<keyword id="KW-0808">Transferase</keyword>
<gene>
    <name evidence="1" type="primary">glmS</name>
    <name type="ordered locus">ACIAD3576</name>
</gene>
<feature type="initiator methionine" description="Removed" evidence="1">
    <location>
        <position position="1"/>
    </location>
</feature>
<feature type="chain" id="PRO_0000135290" description="Glutamine--fructose-6-phosphate aminotransferase [isomerizing]">
    <location>
        <begin position="2"/>
        <end position="612"/>
    </location>
</feature>
<feature type="domain" description="Glutamine amidotransferase type-2" evidence="1">
    <location>
        <begin position="2"/>
        <end position="217"/>
    </location>
</feature>
<feature type="domain" description="SIS 1" evidence="1">
    <location>
        <begin position="283"/>
        <end position="428"/>
    </location>
</feature>
<feature type="domain" description="SIS 2" evidence="1">
    <location>
        <begin position="461"/>
        <end position="602"/>
    </location>
</feature>
<feature type="active site" description="Nucleophile; for GATase activity" evidence="1">
    <location>
        <position position="2"/>
    </location>
</feature>
<feature type="active site" description="For Fru-6P isomerization activity" evidence="1">
    <location>
        <position position="607"/>
    </location>
</feature>
<evidence type="ECO:0000255" key="1">
    <source>
        <dbReference type="HAMAP-Rule" id="MF_00164"/>
    </source>
</evidence>
<organism>
    <name type="scientific">Acinetobacter baylyi (strain ATCC 33305 / BD413 / ADP1)</name>
    <dbReference type="NCBI Taxonomy" id="62977"/>
    <lineage>
        <taxon>Bacteria</taxon>
        <taxon>Pseudomonadati</taxon>
        <taxon>Pseudomonadota</taxon>
        <taxon>Gammaproteobacteria</taxon>
        <taxon>Moraxellales</taxon>
        <taxon>Moraxellaceae</taxon>
        <taxon>Acinetobacter</taxon>
    </lineage>
</organism>
<name>GLMS_ACIAD</name>
<sequence length="612" mass="67502">MCGIVGGVAERNIAEILIEGLKRLEYRGYDSAGVALINQQQILRERRVGKVANLAEAVAQSKISGSLGIAHTRWATHGKPTENNAHPHTSGSVAVVHNGIIENYQELKDDLEALGYVFTSQTDTEVVAHLINHAMTEQHNLLDAVREVVPELKGAYALGIIHTDYPDELITVREGSPLVIGVGIGENFISSDQLALLPVTNRFVYLEEGDIARLTRDSIEIYAHGVKIERPVKELDASVSNASKGEYKHYMLKEIYEQPEAIQQTISQALNGNALREDFLQFAEADFNQIQNVQIIACGTSYHAGMIAKYWFEQLIGVPCQVEIASEFRYRSPVIVANTLYICISQSGETADTLAALRDTQKRAKAKDIQISTLTICNVATSSMVRETDHHLLTLAGPEIGVASTKAFTTQLAALMLLILKIGQVKEQIAAEQIAEIASQLWHCPKVMLDTLQHNAEILRLSELFVEKQHCLFLGRGTHYPIALEGALKLKEISYIHAEGYAAGELKHGPLALVDNEMPVVILAPHDDMLDKLKSNMEEVQARGGELFVFADENSGVREKDRQHVVLIPEVNAWLAPIVYSIPVQLLSYHVAVLRGTDVDQPRNLAKSVTVE</sequence>
<dbReference type="EC" id="2.6.1.16" evidence="1"/>
<dbReference type="EMBL" id="CR543861">
    <property type="protein sequence ID" value="CAG70217.1"/>
    <property type="molecule type" value="Genomic_DNA"/>
</dbReference>
<dbReference type="RefSeq" id="WP_004923173.1">
    <property type="nucleotide sequence ID" value="NC_005966.1"/>
</dbReference>
<dbReference type="SMR" id="Q6F6U8"/>
<dbReference type="STRING" id="202950.GCA_001485005_01640"/>
<dbReference type="GeneID" id="45235749"/>
<dbReference type="KEGG" id="aci:ACIAD3576"/>
<dbReference type="eggNOG" id="COG0449">
    <property type="taxonomic scope" value="Bacteria"/>
</dbReference>
<dbReference type="HOGENOM" id="CLU_012520_5_2_6"/>
<dbReference type="OrthoDB" id="9761808at2"/>
<dbReference type="BioCyc" id="ASP62977:ACIAD_RS16180-MONOMER"/>
<dbReference type="Proteomes" id="UP000000430">
    <property type="component" value="Chromosome"/>
</dbReference>
<dbReference type="GO" id="GO:0005829">
    <property type="term" value="C:cytosol"/>
    <property type="evidence" value="ECO:0007669"/>
    <property type="project" value="TreeGrafter"/>
</dbReference>
<dbReference type="GO" id="GO:0097367">
    <property type="term" value="F:carbohydrate derivative binding"/>
    <property type="evidence" value="ECO:0007669"/>
    <property type="project" value="InterPro"/>
</dbReference>
<dbReference type="GO" id="GO:0004360">
    <property type="term" value="F:glutamine-fructose-6-phosphate transaminase (isomerizing) activity"/>
    <property type="evidence" value="ECO:0007669"/>
    <property type="project" value="UniProtKB-UniRule"/>
</dbReference>
<dbReference type="GO" id="GO:0005975">
    <property type="term" value="P:carbohydrate metabolic process"/>
    <property type="evidence" value="ECO:0007669"/>
    <property type="project" value="UniProtKB-UniRule"/>
</dbReference>
<dbReference type="GO" id="GO:0006002">
    <property type="term" value="P:fructose 6-phosphate metabolic process"/>
    <property type="evidence" value="ECO:0007669"/>
    <property type="project" value="TreeGrafter"/>
</dbReference>
<dbReference type="GO" id="GO:0006487">
    <property type="term" value="P:protein N-linked glycosylation"/>
    <property type="evidence" value="ECO:0007669"/>
    <property type="project" value="TreeGrafter"/>
</dbReference>
<dbReference type="GO" id="GO:0006047">
    <property type="term" value="P:UDP-N-acetylglucosamine metabolic process"/>
    <property type="evidence" value="ECO:0007669"/>
    <property type="project" value="TreeGrafter"/>
</dbReference>
<dbReference type="CDD" id="cd00714">
    <property type="entry name" value="GFAT"/>
    <property type="match status" value="1"/>
</dbReference>
<dbReference type="CDD" id="cd05008">
    <property type="entry name" value="SIS_GlmS_GlmD_1"/>
    <property type="match status" value="1"/>
</dbReference>
<dbReference type="CDD" id="cd05009">
    <property type="entry name" value="SIS_GlmS_GlmD_2"/>
    <property type="match status" value="1"/>
</dbReference>
<dbReference type="FunFam" id="3.40.50.10490:FF:000001">
    <property type="entry name" value="Glutamine--fructose-6-phosphate aminotransferase [isomerizing]"/>
    <property type="match status" value="1"/>
</dbReference>
<dbReference type="FunFam" id="3.40.50.10490:FF:000002">
    <property type="entry name" value="Glutamine--fructose-6-phosphate aminotransferase [isomerizing]"/>
    <property type="match status" value="1"/>
</dbReference>
<dbReference type="FunFam" id="3.60.20.10:FF:000006">
    <property type="entry name" value="Glutamine--fructose-6-phosphate aminotransferase [isomerizing]"/>
    <property type="match status" value="1"/>
</dbReference>
<dbReference type="Gene3D" id="3.40.50.10490">
    <property type="entry name" value="Glucose-6-phosphate isomerase like protein, domain 1"/>
    <property type="match status" value="2"/>
</dbReference>
<dbReference type="Gene3D" id="3.60.20.10">
    <property type="entry name" value="Glutamine Phosphoribosylpyrophosphate, subunit 1, domain 1"/>
    <property type="match status" value="1"/>
</dbReference>
<dbReference type="HAMAP" id="MF_00164">
    <property type="entry name" value="GlmS"/>
    <property type="match status" value="1"/>
</dbReference>
<dbReference type="InterPro" id="IPR017932">
    <property type="entry name" value="GATase_2_dom"/>
</dbReference>
<dbReference type="InterPro" id="IPR005855">
    <property type="entry name" value="GFAT"/>
</dbReference>
<dbReference type="InterPro" id="IPR047084">
    <property type="entry name" value="GFAT_N"/>
</dbReference>
<dbReference type="InterPro" id="IPR035466">
    <property type="entry name" value="GlmS/AgaS_SIS"/>
</dbReference>
<dbReference type="InterPro" id="IPR035490">
    <property type="entry name" value="GlmS/FrlB_SIS"/>
</dbReference>
<dbReference type="InterPro" id="IPR029055">
    <property type="entry name" value="Ntn_hydrolases_N"/>
</dbReference>
<dbReference type="InterPro" id="IPR001347">
    <property type="entry name" value="SIS_dom"/>
</dbReference>
<dbReference type="InterPro" id="IPR046348">
    <property type="entry name" value="SIS_dom_sf"/>
</dbReference>
<dbReference type="NCBIfam" id="TIGR01135">
    <property type="entry name" value="glmS"/>
    <property type="match status" value="1"/>
</dbReference>
<dbReference type="NCBIfam" id="NF001484">
    <property type="entry name" value="PRK00331.1"/>
    <property type="match status" value="1"/>
</dbReference>
<dbReference type="PANTHER" id="PTHR10937">
    <property type="entry name" value="GLUCOSAMINE--FRUCTOSE-6-PHOSPHATE AMINOTRANSFERASE, ISOMERIZING"/>
    <property type="match status" value="1"/>
</dbReference>
<dbReference type="PANTHER" id="PTHR10937:SF0">
    <property type="entry name" value="GLUTAMINE--FRUCTOSE-6-PHOSPHATE TRANSAMINASE (ISOMERIZING)"/>
    <property type="match status" value="1"/>
</dbReference>
<dbReference type="Pfam" id="PF13522">
    <property type="entry name" value="GATase_6"/>
    <property type="match status" value="1"/>
</dbReference>
<dbReference type="Pfam" id="PF01380">
    <property type="entry name" value="SIS"/>
    <property type="match status" value="2"/>
</dbReference>
<dbReference type="SUPFAM" id="SSF56235">
    <property type="entry name" value="N-terminal nucleophile aminohydrolases (Ntn hydrolases)"/>
    <property type="match status" value="1"/>
</dbReference>
<dbReference type="SUPFAM" id="SSF53697">
    <property type="entry name" value="SIS domain"/>
    <property type="match status" value="1"/>
</dbReference>
<dbReference type="PROSITE" id="PS51278">
    <property type="entry name" value="GATASE_TYPE_2"/>
    <property type="match status" value="1"/>
</dbReference>
<dbReference type="PROSITE" id="PS51464">
    <property type="entry name" value="SIS"/>
    <property type="match status" value="2"/>
</dbReference>